<feature type="chain" id="PRO_0000048512" description="Sodium channel protein type 11 subunit alpha">
    <location>
        <begin position="1"/>
        <end position="1765"/>
    </location>
</feature>
<feature type="topological domain" description="Cytoplasmic" evidence="12">
    <location>
        <begin position="1"/>
        <end position="126"/>
    </location>
</feature>
<feature type="transmembrane region" description="Helical; Name=S1 of repeat I" evidence="1">
    <location>
        <begin position="127"/>
        <end position="148"/>
    </location>
</feature>
<feature type="topological domain" description="Extracellular" evidence="12">
    <location>
        <begin position="149"/>
        <end position="157"/>
    </location>
</feature>
<feature type="transmembrane region" description="Helical; Name=S2 of repeat I" evidence="1">
    <location>
        <begin position="158"/>
        <end position="177"/>
    </location>
</feature>
<feature type="topological domain" description="Cytoplasmic" evidence="12">
    <location>
        <begin position="178"/>
        <end position="189"/>
    </location>
</feature>
<feature type="transmembrane region" description="Helical; Name=S3 of repeat I" evidence="1">
    <location>
        <begin position="190"/>
        <end position="209"/>
    </location>
</feature>
<feature type="topological domain" description="Extracellular" evidence="12">
    <location>
        <begin position="210"/>
        <end position="216"/>
    </location>
</feature>
<feature type="transmembrane region" description="Helical; Voltage-sensor; Name=S4 of repeat I" evidence="1">
    <location>
        <begin position="217"/>
        <end position="236"/>
    </location>
</feature>
<feature type="topological domain" description="Cytoplasmic" evidence="12">
    <location>
        <begin position="237"/>
        <end position="252"/>
    </location>
</feature>
<feature type="transmembrane region" description="Helical; Name=S5 of repeat I" evidence="1">
    <location>
        <begin position="253"/>
        <end position="266"/>
    </location>
</feature>
<feature type="topological domain" description="Extracellular" evidence="12">
    <location>
        <begin position="267"/>
        <end position="339"/>
    </location>
</feature>
<feature type="intramembrane region" description="Pore-forming" evidence="2">
    <location>
        <begin position="340"/>
        <end position="364"/>
    </location>
</feature>
<feature type="topological domain" description="Extracellular" evidence="12">
    <location>
        <begin position="365"/>
        <end position="371"/>
    </location>
</feature>
<feature type="transmembrane region" description="Helical; Name=S6 of repeat I" evidence="1">
    <location>
        <begin position="372"/>
        <end position="397"/>
    </location>
</feature>
<feature type="topological domain" description="Cytoplasmic" evidence="12">
    <location>
        <begin position="398"/>
        <end position="567"/>
    </location>
</feature>
<feature type="transmembrane region" description="Helical; Name=S1 of repeat II" evidence="1">
    <location>
        <begin position="568"/>
        <end position="591"/>
    </location>
</feature>
<feature type="topological domain" description="Extracellular" evidence="12">
    <location>
        <begin position="592"/>
        <end position="602"/>
    </location>
</feature>
<feature type="transmembrane region" description="Helical; Name=S2 of repeat II" evidence="1">
    <location>
        <begin position="603"/>
        <end position="626"/>
    </location>
</feature>
<feature type="topological domain" description="Cytoplasmic" evidence="12">
    <location>
        <begin position="627"/>
        <end position="634"/>
    </location>
</feature>
<feature type="transmembrane region" description="Helical; Name=S3 of repeat II" evidence="1">
    <location>
        <begin position="635"/>
        <end position="656"/>
    </location>
</feature>
<feature type="topological domain" description="Extracellular" evidence="12">
    <location>
        <begin position="657"/>
        <end position="662"/>
    </location>
</feature>
<feature type="transmembrane region" description="Helical; Voltage-sensor; Name=S4 of repeat II" evidence="1">
    <location>
        <begin position="663"/>
        <end position="682"/>
    </location>
</feature>
<feature type="topological domain" description="Cytoplasmic" evidence="12">
    <location>
        <begin position="683"/>
        <end position="697"/>
    </location>
</feature>
<feature type="transmembrane region" description="Helical; Name=S5 of repeat II" evidence="1">
    <location>
        <begin position="698"/>
        <end position="720"/>
    </location>
</feature>
<feature type="topological domain" description="Extracellular" evidence="12">
    <location>
        <begin position="721"/>
        <end position="741"/>
    </location>
</feature>
<feature type="intramembrane region" description="Pore-forming" evidence="2">
    <location>
        <begin position="742"/>
        <end position="762"/>
    </location>
</feature>
<feature type="topological domain" description="Extracellular" evidence="12">
    <location>
        <begin position="763"/>
        <end position="772"/>
    </location>
</feature>
<feature type="transmembrane region" description="Helical; Name=S6 of repeat II" evidence="1">
    <location>
        <begin position="773"/>
        <end position="798"/>
    </location>
</feature>
<feature type="topological domain" description="Cytoplasmic" evidence="12">
    <location>
        <begin position="799"/>
        <end position="1029"/>
    </location>
</feature>
<feature type="transmembrane region" description="Helical; Name=S1 of repeat III" evidence="1">
    <location>
        <begin position="1030"/>
        <end position="1052"/>
    </location>
</feature>
<feature type="topological domain" description="Extracellular" evidence="12">
    <location>
        <begin position="1053"/>
        <end position="1066"/>
    </location>
</feature>
<feature type="transmembrane region" description="Helical; Name=S2 of repeat III" evidence="1">
    <location>
        <begin position="1067"/>
        <end position="1092"/>
    </location>
</feature>
<feature type="topological domain" description="Cytoplasmic" evidence="12">
    <location>
        <begin position="1093"/>
        <end position="1098"/>
    </location>
</feature>
<feature type="transmembrane region" description="Helical; Name=S3 of repeat III" evidence="1">
    <location>
        <begin position="1099"/>
        <end position="1116"/>
    </location>
</feature>
<feature type="topological domain" description="Extracellular" evidence="12">
    <location>
        <position position="1117"/>
    </location>
</feature>
<feature type="transmembrane region" description="Helical; Voltage-sensor; Name=S4 of repeat III" evidence="1">
    <location>
        <begin position="1118"/>
        <end position="1139"/>
    </location>
</feature>
<feature type="topological domain" description="Cytoplasmic" evidence="12">
    <location>
        <begin position="1140"/>
        <end position="1158"/>
    </location>
</feature>
<feature type="transmembrane region" description="Helical; Name=S5 of repeat III" evidence="1">
    <location>
        <begin position="1159"/>
        <end position="1180"/>
    </location>
</feature>
<feature type="topological domain" description="Extracellular" evidence="12">
    <location>
        <begin position="1181"/>
        <end position="1223"/>
    </location>
</feature>
<feature type="intramembrane region" description="Pore-forming" evidence="2">
    <location>
        <begin position="1224"/>
        <end position="1245"/>
    </location>
</feature>
<feature type="topological domain" description="Extracellular" evidence="12">
    <location>
        <begin position="1246"/>
        <end position="1261"/>
    </location>
</feature>
<feature type="transmembrane region" description="Helical; Name=S6 of repeat III" evidence="1">
    <location>
        <begin position="1262"/>
        <end position="1288"/>
    </location>
</feature>
<feature type="topological domain" description="Cytoplasmic" evidence="12">
    <location>
        <begin position="1289"/>
        <end position="1341"/>
    </location>
</feature>
<feature type="transmembrane region" description="Helical; Name=S1 of repeat IV" evidence="1">
    <location>
        <begin position="1342"/>
        <end position="1365"/>
    </location>
</feature>
<feature type="topological domain" description="Extracellular" evidence="12">
    <location>
        <begin position="1366"/>
        <end position="1376"/>
    </location>
</feature>
<feature type="transmembrane region" description="Helical; Name=S2 of repeat IV" evidence="1">
    <location>
        <begin position="1377"/>
        <end position="1400"/>
    </location>
</feature>
<feature type="topological domain" description="Cytoplasmic" evidence="12">
    <location>
        <begin position="1401"/>
        <end position="1406"/>
    </location>
</feature>
<feature type="transmembrane region" description="Helical; Name=S3 of repeat IV" evidence="1">
    <location>
        <begin position="1407"/>
        <end position="1430"/>
    </location>
</feature>
<feature type="topological domain" description="Extracellular" evidence="12">
    <location>
        <begin position="1431"/>
        <end position="1440"/>
    </location>
</feature>
<feature type="transmembrane region" description="Helical; Voltage-sensor; Name=S4 of repeat IV" evidence="1">
    <location>
        <begin position="1441"/>
        <end position="1463"/>
    </location>
</feature>
<feature type="topological domain" description="Cytoplasmic" evidence="12">
    <location>
        <begin position="1464"/>
        <end position="1478"/>
    </location>
</feature>
<feature type="transmembrane region" description="Helical; Name=S5 of repeat IV" evidence="1">
    <location>
        <begin position="1479"/>
        <end position="1501"/>
    </location>
</feature>
<feature type="topological domain" description="Extracellular" evidence="12">
    <location>
        <begin position="1502"/>
        <end position="1515"/>
    </location>
</feature>
<feature type="intramembrane region" description="Pore-forming" evidence="2">
    <location>
        <begin position="1516"/>
        <end position="1538"/>
    </location>
</feature>
<feature type="topological domain" description="Extracellular" evidence="12">
    <location>
        <begin position="1539"/>
        <end position="1559"/>
    </location>
</feature>
<feature type="transmembrane region" description="Helical; Name=S6 of repeat IV" evidence="1">
    <location>
        <begin position="1560"/>
        <end position="1584"/>
    </location>
</feature>
<feature type="topological domain" description="Cytoplasmic" evidence="12">
    <location>
        <begin position="1585"/>
        <end position="1765"/>
    </location>
</feature>
<feature type="repeat" description="I" evidence="12">
    <location>
        <begin position="115"/>
        <end position="403"/>
    </location>
</feature>
<feature type="repeat" description="II" evidence="12">
    <location>
        <begin position="554"/>
        <end position="820"/>
    </location>
</feature>
<feature type="repeat" description="III" evidence="12">
    <location>
        <begin position="1022"/>
        <end position="1319"/>
    </location>
</feature>
<feature type="repeat" description="IV" evidence="12">
    <location>
        <begin position="1328"/>
        <end position="1619"/>
    </location>
</feature>
<feature type="glycosylation site" description="N-linked (GlcNAc...) asparagine" evidence="5">
    <location>
        <position position="214"/>
    </location>
</feature>
<feature type="glycosylation site" description="N-linked (GlcNAc...) asparagine" evidence="5">
    <location>
        <position position="319"/>
    </location>
</feature>
<feature type="glycosylation site" description="N-linked (GlcNAc...) asparagine" evidence="5">
    <location>
        <position position="333"/>
    </location>
</feature>
<feature type="glycosylation site" description="N-linked (GlcNAc...) asparagine" evidence="5">
    <location>
        <position position="660"/>
    </location>
</feature>
<feature type="glycosylation site" description="N-linked (GlcNAc...) asparagine" evidence="5">
    <location>
        <position position="723"/>
    </location>
</feature>
<feature type="glycosylation site" description="N-linked (GlcNAc...) asparagine" evidence="5">
    <location>
        <position position="1187"/>
    </location>
</feature>
<feature type="glycosylation site" description="N-linked (GlcNAc...) asparagine" evidence="5">
    <location>
        <position position="1202"/>
    </location>
</feature>
<feature type="glycosylation site" description="N-linked (GlcNAc...) asparagine" evidence="5">
    <location>
        <position position="1207"/>
    </location>
</feature>
<feature type="glycosylation site" description="N-linked (GlcNAc...) asparagine" evidence="5">
    <location>
        <position position="1210"/>
    </location>
</feature>
<feature type="glycosylation site" description="N-linked (GlcNAc...) asparagine" evidence="5">
    <location>
        <position position="1547"/>
    </location>
</feature>
<feature type="disulfide bond" evidence="2">
    <location>
        <begin position="280"/>
        <end position="317"/>
    </location>
</feature>
<feature type="disulfide bond" evidence="2">
    <location>
        <begin position="764"/>
        <end position="774"/>
    </location>
</feature>
<sequence>MEERYYPVIFPDERNFRPFTSDSLAAIEKRIAIQKERKKSKDKAAAEPQPRPQLDLKASRKLPKLYGDIPPELVAKPLEDLDPFYKDHKTFMVLNKKRTIYRFSAKRALFILGPFNPLRSLMIRISVHSVFSMFIICTVIINCMFMANSMERSFDNDIPEYVFIGIYILEAVIKILARGFIVDEFSFLRDPWNWLDFIVIGTAIATCFPGSQVNLSALRTFRVFRALKAISVISGLKVIVGALLRSVKKLVDVMVLTLFCLSIFALVGQQLFMGILNQKCIKHNCGPNPASNKDCFEKEKDSEDFIMCGTWLGSRPCPNGSTCDKTTLNPDNNYTKFDNFGWSFLAMFRVMTQDSWERLYRQILRTSGIYFVFFFVVVIFLGSFYLLNLTLAVVTMAYEEQNRNVAAETEAKEKMFQEAQQLLREEKEALVAMGIDRSSLNSLQASSFSPKKRKFFGSKTRKSFFMRGSKTAQASASDSEDDASKNPQLLEQTKRLSQNLPVDLFDEHVDPLHRQRALSAVSILTITMQEQEKFQEPCFPCGKNLASKYLVWDCSPQWLCIKKVLRTIMTDPFTELAITICIIINTVFLAVEHHNMDDNLKTILKIGNWVFTGIFIAEMCLKIIALDPYHYFRHGWNVFDSIVALLSLADVLYNTLSDNNRSFLASLRVLRVFKLAKSWPTLNTLIKIIGHSVGALGNLTVVLTIVVFIFSVVGMRLFGTKFNKTAYATQERPRRRWHMDNFYHSFLVVFRILCGEWIENMWGCMQDMDGSPLCIIVFVLIMVIGKLVVLNLFIALLLNSFSNEEKDGSLEGETRKTKVQLALDRFRRAFSFMLHALQSFCCKKCRRKNSPKPKETTESFAGENKDSILPDARPWKEYDTDMALYTGQAGAPLAPLAEVEDDVEYCGEGGALPTSQHSAGVQAGDLPPETKQLTSPDDQGVEMEVFSEEDLHLSIQSPRKKSDAVSMLSECSTIDLNDIFRNLQKTVSPKKQPDRCFPKGLSCHFLCHKTDKRKSPWVLWWNIRKTCYQIVKHSWFESFIIFVILLSSGALIFEDVNLPSRPQVEKLLRCTDNIFTFIFLLEMILKWVAFGFRRYFTSAWCWLDFLIVVVSVLSLMNLPSLKSFRTLRALRPLRALSQFEGMKVVVYALISAIPAILNVLLVCLIFWLVFCILGVNLFSGKFGRCINGTDINMYLDFTEVPNRSQCNISNYSWKVPQVNFDNVGNAYLALLQVATYKGWLEIMNAAVDSREKDEQPDFEANLYAYLYFVVFIIFGSFFTLNLFIGVIIDNFNQQQKKLGGQDIFMTEEQKKYYNAMKKLGTKKPQKPIPRPLNKCQAFVFDLVTSQVFDVIILGLIVLNMIIMMAESADQPKDVKKTFDILNIAFVVIFTIECLIKVFALRQHYFTNGWNLFDCVVVVLSIISTLVSRLEDSDISFPPTLFRVVRLARIGRILRLVRAARGIRTLLFALMMSLPSLFNIGLLLFLVMFIYAIFGMSWFSKVKKGSGIDDIFNFETFTGSMLCLFQITTSAGWDTLLNPMLEAKEHCNSSSQDSCQQPQIAVVYFVSYIIISFLIVVNMYIAVILENFNTATEESEDPLGEDDFEIFYEVWEKFDPEASQFIQYSALSDFADALPEPLRVAKPNKFQFLVMDLPMVMGDRLHCMDVLFAFTTRVLGDSSGLDTMKTMMEEKFMEANPFKKLYEPIVTTTKRKEEEQGAAVIQRAYRKHMEKMVKLRLKDRSSSSHQVFCNGDLSSLDVAKVKVHND</sequence>
<organism>
    <name type="scientific">Rattus norvegicus</name>
    <name type="common">Rat</name>
    <dbReference type="NCBI Taxonomy" id="10116"/>
    <lineage>
        <taxon>Eukaryota</taxon>
        <taxon>Metazoa</taxon>
        <taxon>Chordata</taxon>
        <taxon>Craniata</taxon>
        <taxon>Vertebrata</taxon>
        <taxon>Euteleostomi</taxon>
        <taxon>Mammalia</taxon>
        <taxon>Eutheria</taxon>
        <taxon>Euarchontoglires</taxon>
        <taxon>Glires</taxon>
        <taxon>Rodentia</taxon>
        <taxon>Myomorpha</taxon>
        <taxon>Muroidea</taxon>
        <taxon>Muridae</taxon>
        <taxon>Murinae</taxon>
        <taxon>Rattus</taxon>
    </lineage>
</organism>
<accession>O88457</accession>
<protein>
    <recommendedName>
        <fullName evidence="12">Sodium channel protein type 11 subunit alpha</fullName>
    </recommendedName>
    <alternativeName>
        <fullName evidence="11">NaN</fullName>
    </alternativeName>
    <alternativeName>
        <fullName evidence="9">Sensory neuron sodium channel 2</fullName>
    </alternativeName>
    <alternativeName>
        <fullName>Sodium channel protein type XI subunit alpha</fullName>
    </alternativeName>
    <alternativeName>
        <fullName evidence="10">Voltage-gated sodium channel subunit alpha Nav1.9</fullName>
    </alternativeName>
</protein>
<gene>
    <name evidence="13" type="primary">Scn11a</name>
    <name evidence="11" type="synonym">Nan</name>
    <name evidence="9" type="synonym">Sns2</name>
</gene>
<proteinExistence type="evidence at protein level"/>
<keyword id="KW-1003">Cell membrane</keyword>
<keyword id="KW-1015">Disulfide bond</keyword>
<keyword id="KW-0325">Glycoprotein</keyword>
<keyword id="KW-0407">Ion channel</keyword>
<keyword id="KW-0406">Ion transport</keyword>
<keyword id="KW-0472">Membrane</keyword>
<keyword id="KW-1185">Reference proteome</keyword>
<keyword id="KW-0677">Repeat</keyword>
<keyword id="KW-0915">Sodium</keyword>
<keyword id="KW-0894">Sodium channel</keyword>
<keyword id="KW-0739">Sodium transport</keyword>
<keyword id="KW-0812">Transmembrane</keyword>
<keyword id="KW-1133">Transmembrane helix</keyword>
<keyword id="KW-0813">Transport</keyword>
<keyword id="KW-0851">Voltage-gated channel</keyword>
<name>SCNBA_RAT</name>
<dbReference type="EMBL" id="AF059030">
    <property type="protein sequence ID" value="AAC40199.1"/>
    <property type="molecule type" value="mRNA"/>
</dbReference>
<dbReference type="EMBL" id="AJ237852">
    <property type="protein sequence ID" value="CAB41850.1"/>
    <property type="molecule type" value="mRNA"/>
</dbReference>
<dbReference type="PIR" id="T42388">
    <property type="entry name" value="T42388"/>
</dbReference>
<dbReference type="RefSeq" id="NP_062138.1">
    <property type="nucleotide sequence ID" value="NM_019265.2"/>
</dbReference>
<dbReference type="SMR" id="O88457"/>
<dbReference type="CORUM" id="O88457"/>
<dbReference type="FunCoup" id="O88457">
    <property type="interactions" value="4"/>
</dbReference>
<dbReference type="STRING" id="10116.ENSRNOP00000033224"/>
<dbReference type="BindingDB" id="O88457"/>
<dbReference type="ChEMBL" id="CHEMBL2629"/>
<dbReference type="GuidetoPHARMACOLOGY" id="586"/>
<dbReference type="GlyCosmos" id="O88457">
    <property type="glycosylation" value="10 sites, No reported glycans"/>
</dbReference>
<dbReference type="GlyGen" id="O88457">
    <property type="glycosylation" value="10 sites"/>
</dbReference>
<dbReference type="iPTMnet" id="O88457"/>
<dbReference type="PhosphoSitePlus" id="O88457"/>
<dbReference type="PaxDb" id="10116-ENSRNOP00000033224"/>
<dbReference type="GeneID" id="29701"/>
<dbReference type="KEGG" id="rno:29701"/>
<dbReference type="UCSC" id="RGD:3630">
    <property type="organism name" value="rat"/>
</dbReference>
<dbReference type="AGR" id="RGD:3630"/>
<dbReference type="CTD" id="11280"/>
<dbReference type="RGD" id="3630">
    <property type="gene designation" value="Scn11a"/>
</dbReference>
<dbReference type="eggNOG" id="KOG2301">
    <property type="taxonomic scope" value="Eukaryota"/>
</dbReference>
<dbReference type="InParanoid" id="O88457"/>
<dbReference type="OrthoDB" id="70054at9989"/>
<dbReference type="PhylomeDB" id="O88457"/>
<dbReference type="PRO" id="PR:O88457"/>
<dbReference type="Proteomes" id="UP000002494">
    <property type="component" value="Unplaced"/>
</dbReference>
<dbReference type="GO" id="GO:0030424">
    <property type="term" value="C:axon"/>
    <property type="evidence" value="ECO:0000314"/>
    <property type="project" value="ARUK-UCL"/>
</dbReference>
<dbReference type="GO" id="GO:0044295">
    <property type="term" value="C:axonal growth cone"/>
    <property type="evidence" value="ECO:0000266"/>
    <property type="project" value="RGD"/>
</dbReference>
<dbReference type="GO" id="GO:0044299">
    <property type="term" value="C:C-fiber"/>
    <property type="evidence" value="ECO:0000266"/>
    <property type="project" value="RGD"/>
</dbReference>
<dbReference type="GO" id="GO:0044297">
    <property type="term" value="C:cell body"/>
    <property type="evidence" value="ECO:0000266"/>
    <property type="project" value="RGD"/>
</dbReference>
<dbReference type="GO" id="GO:0098978">
    <property type="term" value="C:glutamatergic synapse"/>
    <property type="evidence" value="ECO:0000314"/>
    <property type="project" value="SynGO"/>
</dbReference>
<dbReference type="GO" id="GO:0043025">
    <property type="term" value="C:neuronal cell body"/>
    <property type="evidence" value="ECO:0000266"/>
    <property type="project" value="RGD"/>
</dbReference>
<dbReference type="GO" id="GO:0005886">
    <property type="term" value="C:plasma membrane"/>
    <property type="evidence" value="ECO:0000314"/>
    <property type="project" value="UniProtKB"/>
</dbReference>
<dbReference type="GO" id="GO:0042734">
    <property type="term" value="C:presynaptic membrane"/>
    <property type="evidence" value="ECO:0000314"/>
    <property type="project" value="SynGO"/>
</dbReference>
<dbReference type="GO" id="GO:0001518">
    <property type="term" value="C:voltage-gated sodium channel complex"/>
    <property type="evidence" value="ECO:0000318"/>
    <property type="project" value="GO_Central"/>
</dbReference>
<dbReference type="GO" id="GO:0005248">
    <property type="term" value="F:voltage-gated sodium channel activity"/>
    <property type="evidence" value="ECO:0000314"/>
    <property type="project" value="UniProtKB"/>
</dbReference>
<dbReference type="GO" id="GO:0001508">
    <property type="term" value="P:action potential"/>
    <property type="evidence" value="ECO:0000266"/>
    <property type="project" value="RGD"/>
</dbReference>
<dbReference type="GO" id="GO:0099610">
    <property type="term" value="P:action potential initiation"/>
    <property type="evidence" value="ECO:0000266"/>
    <property type="project" value="RGD"/>
</dbReference>
<dbReference type="GO" id="GO:0002526">
    <property type="term" value="P:acute inflammatory response"/>
    <property type="evidence" value="ECO:0000266"/>
    <property type="project" value="RGD"/>
</dbReference>
<dbReference type="GO" id="GO:0060840">
    <property type="term" value="P:artery development"/>
    <property type="evidence" value="ECO:0000266"/>
    <property type="project" value="RGD"/>
</dbReference>
<dbReference type="GO" id="GO:0007409">
    <property type="term" value="P:axonogenesis"/>
    <property type="evidence" value="ECO:0000266"/>
    <property type="project" value="RGD"/>
</dbReference>
<dbReference type="GO" id="GO:0061367">
    <property type="term" value="P:behavioral response to acetic acid induced pain"/>
    <property type="evidence" value="ECO:0000266"/>
    <property type="project" value="RGD"/>
</dbReference>
<dbReference type="GO" id="GO:0061368">
    <property type="term" value="P:behavioral response to formalin induced pain"/>
    <property type="evidence" value="ECO:0000266"/>
    <property type="project" value="RGD"/>
</dbReference>
<dbReference type="GO" id="GO:0048266">
    <property type="term" value="P:behavioral response to pain"/>
    <property type="evidence" value="ECO:0000266"/>
    <property type="project" value="RGD"/>
</dbReference>
<dbReference type="GO" id="GO:1990408">
    <property type="term" value="P:calcitonin gene-related peptide receptor signaling pathway"/>
    <property type="evidence" value="ECO:0000266"/>
    <property type="project" value="RGD"/>
</dbReference>
<dbReference type="GO" id="GO:0070588">
    <property type="term" value="P:calcium ion transmembrane transport"/>
    <property type="evidence" value="ECO:0000266"/>
    <property type="project" value="RGD"/>
</dbReference>
<dbReference type="GO" id="GO:0141156">
    <property type="term" value="P:cAMP/PKA signal transduction"/>
    <property type="evidence" value="ECO:0000266"/>
    <property type="project" value="RGD"/>
</dbReference>
<dbReference type="GO" id="GO:0048870">
    <property type="term" value="P:cell motility"/>
    <property type="evidence" value="ECO:0000266"/>
    <property type="project" value="RGD"/>
</dbReference>
<dbReference type="GO" id="GO:0070417">
    <property type="term" value="P:cellular response to cold"/>
    <property type="evidence" value="ECO:0000266"/>
    <property type="project" value="RGD"/>
</dbReference>
<dbReference type="GO" id="GO:0007635">
    <property type="term" value="P:chemosensory behavior"/>
    <property type="evidence" value="ECO:0000266"/>
    <property type="project" value="RGD"/>
</dbReference>
<dbReference type="GO" id="GO:0002544">
    <property type="term" value="P:chronic inflammatory response"/>
    <property type="evidence" value="ECO:0000266"/>
    <property type="project" value="RGD"/>
</dbReference>
<dbReference type="GO" id="GO:0007623">
    <property type="term" value="P:circadian rhythm"/>
    <property type="evidence" value="ECO:0000266"/>
    <property type="project" value="RGD"/>
</dbReference>
<dbReference type="GO" id="GO:0050974">
    <property type="term" value="P:detection of mechanical stimulus involved in sensory perception"/>
    <property type="evidence" value="ECO:0000266"/>
    <property type="project" value="RGD"/>
</dbReference>
<dbReference type="GO" id="GO:0050966">
    <property type="term" value="P:detection of mechanical stimulus involved in sensory perception of pain"/>
    <property type="evidence" value="ECO:0000266"/>
    <property type="project" value="RGD"/>
</dbReference>
<dbReference type="GO" id="GO:0050965">
    <property type="term" value="P:detection of temperature stimulus involved in sensory perception of pain"/>
    <property type="evidence" value="ECO:0000266"/>
    <property type="project" value="RGD"/>
</dbReference>
<dbReference type="GO" id="GO:0051649">
    <property type="term" value="P:establishment of localization in cell"/>
    <property type="evidence" value="ECO:0000266"/>
    <property type="project" value="RGD"/>
</dbReference>
<dbReference type="GO" id="GO:0007186">
    <property type="term" value="P:G protein-coupled receptor signaling pathway"/>
    <property type="evidence" value="ECO:0000266"/>
    <property type="project" value="RGD"/>
</dbReference>
<dbReference type="GO" id="GO:0006954">
    <property type="term" value="P:inflammatory response"/>
    <property type="evidence" value="ECO:0000266"/>
    <property type="project" value="RGD"/>
</dbReference>
<dbReference type="GO" id="GO:0043303">
    <property type="term" value="P:mast cell degranulation"/>
    <property type="evidence" value="ECO:0000266"/>
    <property type="project" value="RGD"/>
</dbReference>
<dbReference type="GO" id="GO:0086010">
    <property type="term" value="P:membrane depolarization during action potential"/>
    <property type="evidence" value="ECO:0000314"/>
    <property type="project" value="UniProtKB"/>
</dbReference>
<dbReference type="GO" id="GO:0060073">
    <property type="term" value="P:micturition"/>
    <property type="evidence" value="ECO:0000266"/>
    <property type="project" value="RGD"/>
</dbReference>
<dbReference type="GO" id="GO:0019228">
    <property type="term" value="P:neuronal action potential"/>
    <property type="evidence" value="ECO:0000266"/>
    <property type="project" value="RGD"/>
</dbReference>
<dbReference type="GO" id="GO:0021554">
    <property type="term" value="P:optic nerve development"/>
    <property type="evidence" value="ECO:0000270"/>
    <property type="project" value="RGD"/>
</dbReference>
<dbReference type="GO" id="GO:0060004">
    <property type="term" value="P:reflex"/>
    <property type="evidence" value="ECO:0000266"/>
    <property type="project" value="RGD"/>
</dbReference>
<dbReference type="GO" id="GO:0042391">
    <property type="term" value="P:regulation of membrane potential"/>
    <property type="evidence" value="ECO:0000266"/>
    <property type="project" value="RGD"/>
</dbReference>
<dbReference type="GO" id="GO:0010996">
    <property type="term" value="P:response to auditory stimulus"/>
    <property type="evidence" value="ECO:0000266"/>
    <property type="project" value="RGD"/>
</dbReference>
<dbReference type="GO" id="GO:0009409">
    <property type="term" value="P:response to cold"/>
    <property type="evidence" value="ECO:0000266"/>
    <property type="project" value="RGD"/>
</dbReference>
<dbReference type="GO" id="GO:0009408">
    <property type="term" value="P:response to heat"/>
    <property type="evidence" value="ECO:0000266"/>
    <property type="project" value="RGD"/>
</dbReference>
<dbReference type="GO" id="GO:0009644">
    <property type="term" value="P:response to high light intensity"/>
    <property type="evidence" value="ECO:0000266"/>
    <property type="project" value="RGD"/>
</dbReference>
<dbReference type="GO" id="GO:0071731">
    <property type="term" value="P:response to nitric oxide"/>
    <property type="evidence" value="ECO:0000266"/>
    <property type="project" value="RGD"/>
</dbReference>
<dbReference type="GO" id="GO:0048265">
    <property type="term" value="P:response to pain"/>
    <property type="evidence" value="ECO:0000266"/>
    <property type="project" value="RGD"/>
</dbReference>
<dbReference type="GO" id="GO:0034695">
    <property type="term" value="P:response to prostaglandin E"/>
    <property type="evidence" value="ECO:0000266"/>
    <property type="project" value="RGD"/>
</dbReference>
<dbReference type="GO" id="GO:0009636">
    <property type="term" value="P:response to toxic substance"/>
    <property type="evidence" value="ECO:0000266"/>
    <property type="project" value="RGD"/>
</dbReference>
<dbReference type="GO" id="GO:0009410">
    <property type="term" value="P:response to xenobiotic stimulus"/>
    <property type="evidence" value="ECO:0000266"/>
    <property type="project" value="RGD"/>
</dbReference>
<dbReference type="GO" id="GO:0160025">
    <property type="term" value="P:sensory perception of itch"/>
    <property type="evidence" value="ECO:0000266"/>
    <property type="project" value="RGD"/>
</dbReference>
<dbReference type="GO" id="GO:0019233">
    <property type="term" value="P:sensory perception of pain"/>
    <property type="evidence" value="ECO:0000250"/>
    <property type="project" value="UniProtKB"/>
</dbReference>
<dbReference type="GO" id="GO:0060538">
    <property type="term" value="P:skeletal muscle organ development"/>
    <property type="evidence" value="ECO:0000266"/>
    <property type="project" value="RGD"/>
</dbReference>
<dbReference type="GO" id="GO:1990770">
    <property type="term" value="P:small intestine smooth muscle contraction"/>
    <property type="evidence" value="ECO:0000266"/>
    <property type="project" value="RGD"/>
</dbReference>
<dbReference type="GO" id="GO:0035725">
    <property type="term" value="P:sodium ion transmembrane transport"/>
    <property type="evidence" value="ECO:0000266"/>
    <property type="project" value="RGD"/>
</dbReference>
<dbReference type="GO" id="GO:0006814">
    <property type="term" value="P:sodium ion transport"/>
    <property type="evidence" value="ECO:0000266"/>
    <property type="project" value="RGD"/>
</dbReference>
<dbReference type="GO" id="GO:0040040">
    <property type="term" value="P:thermosensory behavior"/>
    <property type="evidence" value="ECO:0000266"/>
    <property type="project" value="RGD"/>
</dbReference>
<dbReference type="GO" id="GO:0001966">
    <property type="term" value="P:thigmotaxis"/>
    <property type="evidence" value="ECO:0000266"/>
    <property type="project" value="RGD"/>
</dbReference>
<dbReference type="GO" id="GO:0019226">
    <property type="term" value="P:transmission of nerve impulse"/>
    <property type="evidence" value="ECO:0000266"/>
    <property type="project" value="RGD"/>
</dbReference>
<dbReference type="CDD" id="cd13433">
    <property type="entry name" value="Na_channel_gate"/>
    <property type="match status" value="1"/>
</dbReference>
<dbReference type="FunFam" id="1.10.238.10:FF:000002">
    <property type="entry name" value="Sodium channel protein"/>
    <property type="match status" value="1"/>
</dbReference>
<dbReference type="FunFam" id="1.10.287.70:FF:000001">
    <property type="entry name" value="Sodium channel protein"/>
    <property type="match status" value="1"/>
</dbReference>
<dbReference type="FunFam" id="1.10.287.70:FF:000116">
    <property type="entry name" value="Sodium channel protein"/>
    <property type="match status" value="1"/>
</dbReference>
<dbReference type="FunFam" id="1.20.120.350:FF:000002">
    <property type="entry name" value="Sodium channel protein"/>
    <property type="match status" value="1"/>
</dbReference>
<dbReference type="FunFam" id="1.20.120.350:FF:000065">
    <property type="entry name" value="Sodium channel protein"/>
    <property type="match status" value="1"/>
</dbReference>
<dbReference type="FunFam" id="1.20.120.350:FF:000066">
    <property type="entry name" value="Sodium channel protein"/>
    <property type="match status" value="1"/>
</dbReference>
<dbReference type="FunFam" id="1.20.120.350:FF:000075">
    <property type="entry name" value="Sodium channel protein"/>
    <property type="match status" value="1"/>
</dbReference>
<dbReference type="Gene3D" id="1.10.287.70">
    <property type="match status" value="4"/>
</dbReference>
<dbReference type="Gene3D" id="1.10.238.10">
    <property type="entry name" value="EF-hand"/>
    <property type="match status" value="1"/>
</dbReference>
<dbReference type="Gene3D" id="1.20.5.1190">
    <property type="entry name" value="iswi atpase"/>
    <property type="match status" value="1"/>
</dbReference>
<dbReference type="Gene3D" id="1.20.120.350">
    <property type="entry name" value="Voltage-gated potassium channels. Chain C"/>
    <property type="match status" value="4"/>
</dbReference>
<dbReference type="InterPro" id="IPR005821">
    <property type="entry name" value="Ion_trans_dom"/>
</dbReference>
<dbReference type="InterPro" id="IPR001696">
    <property type="entry name" value="Na_channel_asu"/>
</dbReference>
<dbReference type="InterPro" id="IPR044564">
    <property type="entry name" value="Na_chnl_inactivation_gate"/>
</dbReference>
<dbReference type="InterPro" id="IPR010526">
    <property type="entry name" value="Na_trans_assoc_dom"/>
</dbReference>
<dbReference type="InterPro" id="IPR043203">
    <property type="entry name" value="VGCC_Ca_Na"/>
</dbReference>
<dbReference type="InterPro" id="IPR027359">
    <property type="entry name" value="Volt_channel_dom_sf"/>
</dbReference>
<dbReference type="PANTHER" id="PTHR10037:SF210">
    <property type="entry name" value="SODIUM CHANNEL PROTEIN TYPE 11 SUBUNIT ALPHA"/>
    <property type="match status" value="1"/>
</dbReference>
<dbReference type="PANTHER" id="PTHR10037">
    <property type="entry name" value="VOLTAGE-GATED CATION CHANNEL CALCIUM AND SODIUM"/>
    <property type="match status" value="1"/>
</dbReference>
<dbReference type="Pfam" id="PF00520">
    <property type="entry name" value="Ion_trans"/>
    <property type="match status" value="4"/>
</dbReference>
<dbReference type="Pfam" id="PF24609">
    <property type="entry name" value="IQ_SCN5A_C"/>
    <property type="match status" value="1"/>
</dbReference>
<dbReference type="Pfam" id="PF06512">
    <property type="entry name" value="Na_trans_assoc"/>
    <property type="match status" value="1"/>
</dbReference>
<dbReference type="PRINTS" id="PR00170">
    <property type="entry name" value="NACHANNEL"/>
</dbReference>
<dbReference type="SUPFAM" id="SSF81324">
    <property type="entry name" value="Voltage-gated potassium channels"/>
    <property type="match status" value="4"/>
</dbReference>
<evidence type="ECO:0000250" key="1"/>
<evidence type="ECO:0000250" key="2">
    <source>
        <dbReference type="UniProtKB" id="D0E0C2"/>
    </source>
</evidence>
<evidence type="ECO:0000250" key="3">
    <source>
        <dbReference type="UniProtKB" id="Q62968"/>
    </source>
</evidence>
<evidence type="ECO:0000250" key="4">
    <source>
        <dbReference type="UniProtKB" id="Q9UI33"/>
    </source>
</evidence>
<evidence type="ECO:0000255" key="5"/>
<evidence type="ECO:0000269" key="6">
    <source>
    </source>
</evidence>
<evidence type="ECO:0000269" key="7">
    <source>
    </source>
</evidence>
<evidence type="ECO:0000269" key="8">
    <source>
    </source>
</evidence>
<evidence type="ECO:0000303" key="9">
    <source>
    </source>
</evidence>
<evidence type="ECO:0000303" key="10">
    <source>
    </source>
</evidence>
<evidence type="ECO:0000303" key="11">
    <source>
    </source>
</evidence>
<evidence type="ECO:0000305" key="12"/>
<evidence type="ECO:0000312" key="13">
    <source>
        <dbReference type="RGD" id="3630"/>
    </source>
</evidence>
<comment type="function">
    <text evidence="4 6">Sodium channel mediating the voltage-dependent sodium ion permeability of excitable membranes. Assuming opened or closed conformations in response to the voltage difference across the membrane, the protein forms a sodium-selective channel through which sodium ions may pass in accordance with their electrochemical gradient (PubMed:10196578). Involved in membrane depolarization during action potential in nociceptors which function as key relay stations for the electrical transmission of pain signals from the periphery to the central nervous system. Also involved in rapid BDNF-evoked neuronal depolarization (By similarity).</text>
</comment>
<comment type="catalytic activity">
    <reaction evidence="6">
        <text>Na(+)(in) = Na(+)(out)</text>
        <dbReference type="Rhea" id="RHEA:34963"/>
        <dbReference type="ChEBI" id="CHEBI:29101"/>
    </reaction>
</comment>
<comment type="activity regulation">
    <text evidence="6">Activity is not sensitive to inhibition by tetrodotoxin.</text>
</comment>
<comment type="subunit">
    <text evidence="3">The voltage-resistant sodium channel consists of an ion conducting pore forming alpha-subunit regulated by one or more auxiliary subunits SCN1B, SCN2B and SCN3B.</text>
</comment>
<comment type="subcellular location">
    <subcellularLocation>
        <location evidence="6">Cell membrane</location>
        <topology evidence="5">Multi-pass membrane protein</topology>
    </subcellularLocation>
</comment>
<comment type="tissue specificity">
    <text evidence="6 7 8">Expressed (at protein level) in myenteric sensory neurons. Expressed in small sensory neurons of the dorsal root ganglia (C-fiber neurons) and trigeminal ganglia.</text>
</comment>
<comment type="developmental stage">
    <text evidence="7">Expressed in dorsal root ganglia at 17 dpc onwards.</text>
</comment>
<comment type="induction">
    <text evidence="6 8">Down-regulated after axotomy and up-regulated following hind paw inflammation. Down-regulated in vitro by electrical stimulation and by deprivation of NGF.</text>
</comment>
<comment type="domain">
    <text evidence="12">The sequence contains 4 internal repeats, each with 5 hydrophobic segments (S1, S2, S3, S5, S6) and one positively charged segment (S4). Segments S4 are probably the voltage-sensors and are characterized by a series of positively charged amino acids at every third position.</text>
</comment>
<comment type="similarity">
    <text evidence="12">Belongs to the sodium channel (TC 1.A.1.10) family. Nav1.9/SCN11A subfamily.</text>
</comment>
<reference key="1">
    <citation type="journal article" date="1998" name="Proc. Natl. Acad. Sci. U.S.A.">
        <title>NaN, a novel voltage-gated Na channel, is expressed preferentially in peripheral sensory neurons and down-regulated after axotomy.</title>
        <authorList>
            <person name="Dib-Hajj S.D."/>
            <person name="Tyrrell L."/>
            <person name="Black J.A."/>
            <person name="Waxman S.G."/>
        </authorList>
    </citation>
    <scope>NUCLEOTIDE SEQUENCE [MRNA]</scope>
    <scope>TISSUE SPECIFICITY</scope>
    <scope>INDUCTION</scope>
    <source>
        <strain>Sprague-Dawley</strain>
        <tissue>Spinal ganglion</tissue>
    </source>
</reference>
<reference key="2">
    <citation type="journal article" date="1998" name="Nat. Neurosci.">
        <title>Two sodium channels contribute to the TTX-R sodium current in primary sensory neurons.</title>
        <authorList>
            <person name="Tate S.N."/>
            <person name="Benn S.C."/>
            <person name="Hick C.A."/>
            <person name="Trezise D."/>
            <person name="John V.H."/>
            <person name="Mannion R.J."/>
            <person name="Costigan M."/>
            <person name="Plumpton C."/>
            <person name="Grose D."/>
            <person name="Gladwell Z."/>
            <person name="Kendall G."/>
            <person name="Dale K."/>
            <person name="Bountra C."/>
            <person name="Woolf C.J."/>
        </authorList>
    </citation>
    <scope>NUCLEOTIDE SEQUENCE [MRNA]</scope>
    <scope>FUNCTION IN VOLTAGE-EVOKED DEPOLARIZATION</scope>
    <scope>TRANSPORTER ACTIVITY</scope>
    <scope>ACTIVITY REGULATION</scope>
    <scope>SUBCELLULAR LOCATION</scope>
    <scope>TISSUE SPECIFICITY</scope>
    <scope>INDUCTION</scope>
    <source>
        <strain>Sprague-Dawley</strain>
        <tissue>Spinal ganglion</tissue>
    </source>
</reference>
<reference key="3">
    <citation type="journal article" date="2001" name="J. Neurosci.">
        <title>Developmental expression of the TTX-resistant voltage-gated sodium channels Nav1.8 (SNS) and Nav1.9 (SNS2) in primary sensory neurons.</title>
        <authorList>
            <person name="Benn S.C."/>
            <person name="Costigan M."/>
            <person name="Tate S."/>
            <person name="Fitzgerald M."/>
            <person name="Woolf C.J."/>
        </authorList>
    </citation>
    <scope>TISSUE SPECIFICITY</scope>
    <scope>DEVELOPMENTAL STAGE</scope>
</reference>
<reference key="4">
    <citation type="journal article" date="2003" name="Trends Neurosci.">
        <title>Na+ channel Nav1.9: in search of a gating mechanism.</title>
        <authorList>
            <person name="Delmas P."/>
            <person name="Coste B."/>
        </authorList>
    </citation>
    <scope>REVIEW</scope>
</reference>